<gene>
    <name evidence="3" type="primary">ubiM</name>
    <name evidence="6" type="ordered locus">NMC1849</name>
</gene>
<sequence length="461" mass="51325">MRLFTYPTPDLIHIKLKVKIRIHPPLHISSTAGFDIIAYLLQIVQTAFKPLQMPSEIIGIRLCKGYFMSLHSDILVVGAGPAGLSFAAELAGSGLKVTLIERSPLTVLQNPPYDGREIALTHFSREIMQRLGMWDKIPENEIYPLRDAKVLNGRSDYQLHFPQPTEARGEPADCLGYLISNHNIRRAAYEVVSQLDNVSILTDTVVKEVKTSDNEAQVILENGKILTARLLLAADSRFSQTRRQLGISSDMHDYSRTMFVCRMKHTLSNQHTAYECFHYGRTIALLPLEEHLTNTVITVDTDKINSVQNLSPEELAASVKEQLKGRLGDMELVSSIHHYPLVGMIAKRFYGKRSALIGDAAVGMHPVTAHGFNLGLSSADILAKLILEAEQRGQDIGASSLLEKYSNKHMLHAHPLYHGTNMMLKLFTNETAPAKLLRGLVLRAGNNFPPLKKLITKQLTG</sequence>
<protein>
    <recommendedName>
        <fullName evidence="4">Ubiquinone hydroxylase UbiM</fullName>
        <shortName evidence="3">UQ hydroxylase</shortName>
    </recommendedName>
    <alternativeName>
        <fullName evidence="4">2-polyprenyl-6-methoxyphenol hydroxylase</fullName>
        <ecNumber evidence="5">1.14.13.-</ecNumber>
    </alternativeName>
    <alternativeName>
        <fullName evidence="4">2-polyprenylphenol hydroxylase</fullName>
        <ecNumber evidence="5">1.14.13.240</ecNumber>
    </alternativeName>
    <alternativeName>
        <fullName evidence="4">3-demethoxyubiquinol 3-hydroxylase</fullName>
        <ecNumber evidence="5">1.14.99.60</ecNumber>
    </alternativeName>
</protein>
<comment type="function">
    <text evidence="2">Catalyzes the hydroxylation of three positions of the aromatic ring during ubiquinone biosynthesis.</text>
</comment>
<comment type="catalytic activity">
    <reaction evidence="5">
        <text>a 2-(all-trans-polyprenyl)phenol + NADPH + O2 + H(+) = a 3-(all-trans-polyprenyl)benzene-1,2-diol + NADP(+) + H2O</text>
        <dbReference type="Rhea" id="RHEA:55892"/>
        <dbReference type="Rhea" id="RHEA-COMP:9516"/>
        <dbReference type="Rhea" id="RHEA-COMP:9550"/>
        <dbReference type="ChEBI" id="CHEBI:1269"/>
        <dbReference type="ChEBI" id="CHEBI:15377"/>
        <dbReference type="ChEBI" id="CHEBI:15378"/>
        <dbReference type="ChEBI" id="CHEBI:15379"/>
        <dbReference type="ChEBI" id="CHEBI:57783"/>
        <dbReference type="ChEBI" id="CHEBI:58349"/>
        <dbReference type="ChEBI" id="CHEBI:62729"/>
        <dbReference type="EC" id="1.14.13.240"/>
    </reaction>
</comment>
<comment type="catalytic activity">
    <reaction evidence="5">
        <text>a 5-methoxy-2-methyl-3-(all-trans-polyprenyl)benzene-1,4-diol + AH2 + O2 = a 3-demethylubiquinol + A + H2O</text>
        <dbReference type="Rhea" id="RHEA:50908"/>
        <dbReference type="Rhea" id="RHEA-COMP:10859"/>
        <dbReference type="Rhea" id="RHEA-COMP:10914"/>
        <dbReference type="ChEBI" id="CHEBI:13193"/>
        <dbReference type="ChEBI" id="CHEBI:15377"/>
        <dbReference type="ChEBI" id="CHEBI:15379"/>
        <dbReference type="ChEBI" id="CHEBI:17499"/>
        <dbReference type="ChEBI" id="CHEBI:84167"/>
        <dbReference type="ChEBI" id="CHEBI:84422"/>
        <dbReference type="EC" id="1.14.99.60"/>
    </reaction>
</comment>
<comment type="cofactor">
    <cofactor evidence="1">
        <name>FAD</name>
        <dbReference type="ChEBI" id="CHEBI:57692"/>
    </cofactor>
</comment>
<comment type="pathway">
    <text evidence="2">Cofactor biosynthesis; ubiquinone biosynthesis.</text>
</comment>
<comment type="similarity">
    <text evidence="4">Belongs to the UbiH/COQ6 family.</text>
</comment>
<organism>
    <name type="scientific">Neisseria meningitidis serogroup C / serotype 2a (strain ATCC 700532 / DSM 15464 / FAM18)</name>
    <dbReference type="NCBI Taxonomy" id="272831"/>
    <lineage>
        <taxon>Bacteria</taxon>
        <taxon>Pseudomonadati</taxon>
        <taxon>Pseudomonadota</taxon>
        <taxon>Betaproteobacteria</taxon>
        <taxon>Neisseriales</taxon>
        <taxon>Neisseriaceae</taxon>
        <taxon>Neisseria</taxon>
    </lineage>
</organism>
<dbReference type="EC" id="1.14.13.-" evidence="5"/>
<dbReference type="EC" id="1.14.13.240" evidence="5"/>
<dbReference type="EC" id="1.14.99.60" evidence="5"/>
<dbReference type="EMBL" id="AM421808">
    <property type="protein sequence ID" value="CAM11015.1"/>
    <property type="molecule type" value="Genomic_DNA"/>
</dbReference>
<dbReference type="SMR" id="A1KVW0"/>
<dbReference type="KEGG" id="nmc:NMC1849"/>
<dbReference type="HOGENOM" id="CLU_009665_8_1_4"/>
<dbReference type="UniPathway" id="UPA00232"/>
<dbReference type="Proteomes" id="UP000002286">
    <property type="component" value="Chromosome"/>
</dbReference>
<dbReference type="GO" id="GO:0008682">
    <property type="term" value="F:3-demethoxyubiquinol 3-hydroxylase activity"/>
    <property type="evidence" value="ECO:0007669"/>
    <property type="project" value="UniProtKB-EC"/>
</dbReference>
<dbReference type="GO" id="GO:0071949">
    <property type="term" value="F:FAD binding"/>
    <property type="evidence" value="ECO:0007669"/>
    <property type="project" value="InterPro"/>
</dbReference>
<dbReference type="GO" id="GO:0006744">
    <property type="term" value="P:ubiquinone biosynthetic process"/>
    <property type="evidence" value="ECO:0007669"/>
    <property type="project" value="UniProtKB-UniPathway"/>
</dbReference>
<dbReference type="FunFam" id="3.50.50.60:FF:000219">
    <property type="entry name" value="Ubiquinone biosynthesis hydroxylase"/>
    <property type="match status" value="1"/>
</dbReference>
<dbReference type="Gene3D" id="3.50.50.60">
    <property type="entry name" value="FAD/NAD(P)-binding domain"/>
    <property type="match status" value="2"/>
</dbReference>
<dbReference type="InterPro" id="IPR002938">
    <property type="entry name" value="FAD-bd"/>
</dbReference>
<dbReference type="InterPro" id="IPR036188">
    <property type="entry name" value="FAD/NAD-bd_sf"/>
</dbReference>
<dbReference type="InterPro" id="IPR010971">
    <property type="entry name" value="UbiH/COQ6"/>
</dbReference>
<dbReference type="InterPro" id="IPR051205">
    <property type="entry name" value="UbiH/COQ6_monooxygenase"/>
</dbReference>
<dbReference type="NCBIfam" id="NF006593">
    <property type="entry name" value="PRK09126.1"/>
    <property type="match status" value="1"/>
</dbReference>
<dbReference type="NCBIfam" id="TIGR01988">
    <property type="entry name" value="Ubi-OHases"/>
    <property type="match status" value="1"/>
</dbReference>
<dbReference type="PANTHER" id="PTHR43876:SF25">
    <property type="entry name" value="MONOOXYGENASE NMA2164"/>
    <property type="match status" value="1"/>
</dbReference>
<dbReference type="PANTHER" id="PTHR43876">
    <property type="entry name" value="UBIQUINONE BIOSYNTHESIS MONOOXYGENASE COQ6, MITOCHONDRIAL"/>
    <property type="match status" value="1"/>
</dbReference>
<dbReference type="Pfam" id="PF01494">
    <property type="entry name" value="FAD_binding_3"/>
    <property type="match status" value="1"/>
</dbReference>
<dbReference type="PRINTS" id="PR00420">
    <property type="entry name" value="RNGMNOXGNASE"/>
</dbReference>
<dbReference type="SUPFAM" id="SSF51905">
    <property type="entry name" value="FAD/NAD(P)-binding domain"/>
    <property type="match status" value="1"/>
</dbReference>
<feature type="chain" id="PRO_0000447678" description="Ubiquinone hydroxylase UbiM">
    <location>
        <begin position="1"/>
        <end position="461"/>
    </location>
</feature>
<reference key="1">
    <citation type="journal article" date="2007" name="PLoS Genet.">
        <title>Meningococcal genetic variation mechanisms viewed through comparative analysis of serogroup C strain FAM18.</title>
        <authorList>
            <person name="Bentley S.D."/>
            <person name="Vernikos G.S."/>
            <person name="Snyder L.A.S."/>
            <person name="Churcher C."/>
            <person name="Arrowsmith C."/>
            <person name="Chillingworth T."/>
            <person name="Cronin A."/>
            <person name="Davis P.H."/>
            <person name="Holroyd N.E."/>
            <person name="Jagels K."/>
            <person name="Maddison M."/>
            <person name="Moule S."/>
            <person name="Rabbinowitsch E."/>
            <person name="Sharp S."/>
            <person name="Unwin L."/>
            <person name="Whitehead S."/>
            <person name="Quail M.A."/>
            <person name="Achtman M."/>
            <person name="Barrell B.G."/>
            <person name="Saunders N.J."/>
            <person name="Parkhill J."/>
        </authorList>
    </citation>
    <scope>NUCLEOTIDE SEQUENCE [LARGE SCALE GENOMIC DNA]</scope>
    <source>
        <strain>ATCC 700532 / DSM 15464 / FAM18</strain>
    </source>
</reference>
<reference key="2">
    <citation type="journal article" date="2019" name="Cell Chem. Biol.">
        <title>A soluble metabolon synthesizes the isoprenoid lipid ubiquinone.</title>
        <authorList>
            <person name="Hajj Chehade M."/>
            <person name="Pelosi L."/>
            <person name="Fyfe C.D."/>
            <person name="Loiseau L."/>
            <person name="Rascalou B."/>
            <person name="Brugiere S."/>
            <person name="Kazemzadeh K."/>
            <person name="Vo C.D."/>
            <person name="Ciccone L."/>
            <person name="Aussel L."/>
            <person name="Coute Y."/>
            <person name="Fontecave M."/>
            <person name="Barras F."/>
            <person name="Lombard M."/>
            <person name="Pierrel F."/>
        </authorList>
    </citation>
    <scope>FUNCTION</scope>
    <scope>CATALYTIC ACTIVITY</scope>
    <scope>PATHWAY</scope>
</reference>
<keyword id="KW-0274">FAD</keyword>
<keyword id="KW-0285">Flavoprotein</keyword>
<keyword id="KW-0503">Monooxygenase</keyword>
<keyword id="KW-0560">Oxidoreductase</keyword>
<keyword id="KW-0831">Ubiquinone biosynthesis</keyword>
<accession>A1KVW0</accession>
<proteinExistence type="evidence at protein level"/>
<evidence type="ECO:0000250" key="1">
    <source>
        <dbReference type="UniProtKB" id="P25535"/>
    </source>
</evidence>
<evidence type="ECO:0000269" key="2">
    <source>
    </source>
</evidence>
<evidence type="ECO:0000303" key="3">
    <source>
    </source>
</evidence>
<evidence type="ECO:0000305" key="4"/>
<evidence type="ECO:0000305" key="5">
    <source>
    </source>
</evidence>
<evidence type="ECO:0000312" key="6">
    <source>
        <dbReference type="EMBL" id="CAM11015.1"/>
    </source>
</evidence>
<name>UBIM_NEIMF</name>